<evidence type="ECO:0000255" key="1">
    <source>
        <dbReference type="HAMAP-Rule" id="MF_00249"/>
    </source>
</evidence>
<protein>
    <recommendedName>
        <fullName evidence="1">ATP-dependent protease ATPase subunit HslU</fullName>
    </recommendedName>
    <alternativeName>
        <fullName evidence="1">Unfoldase HslU</fullName>
    </alternativeName>
</protein>
<reference key="1">
    <citation type="submission" date="2006-03" db="EMBL/GenBank/DDBJ databases">
        <title>Complete sequence of Rhodopseudomonas palustris BisB18.</title>
        <authorList>
            <consortium name="US DOE Joint Genome Institute"/>
            <person name="Copeland A."/>
            <person name="Lucas S."/>
            <person name="Lapidus A."/>
            <person name="Barry K."/>
            <person name="Detter J.C."/>
            <person name="Glavina del Rio T."/>
            <person name="Hammon N."/>
            <person name="Israni S."/>
            <person name="Dalin E."/>
            <person name="Tice H."/>
            <person name="Pitluck S."/>
            <person name="Chain P."/>
            <person name="Malfatti S."/>
            <person name="Shin M."/>
            <person name="Vergez L."/>
            <person name="Schmutz J."/>
            <person name="Larimer F."/>
            <person name="Land M."/>
            <person name="Hauser L."/>
            <person name="Pelletier D.A."/>
            <person name="Kyrpides N."/>
            <person name="Anderson I."/>
            <person name="Oda Y."/>
            <person name="Harwood C.S."/>
            <person name="Richardson P."/>
        </authorList>
    </citation>
    <scope>NUCLEOTIDE SEQUENCE [LARGE SCALE GENOMIC DNA]</scope>
    <source>
        <strain>BisB18</strain>
    </source>
</reference>
<proteinExistence type="inferred from homology"/>
<organism>
    <name type="scientific">Rhodopseudomonas palustris (strain BisB18)</name>
    <dbReference type="NCBI Taxonomy" id="316056"/>
    <lineage>
        <taxon>Bacteria</taxon>
        <taxon>Pseudomonadati</taxon>
        <taxon>Pseudomonadota</taxon>
        <taxon>Alphaproteobacteria</taxon>
        <taxon>Hyphomicrobiales</taxon>
        <taxon>Nitrobacteraceae</taxon>
        <taxon>Rhodopseudomonas</taxon>
    </lineage>
</organism>
<keyword id="KW-0067">ATP-binding</keyword>
<keyword id="KW-0143">Chaperone</keyword>
<keyword id="KW-0963">Cytoplasm</keyword>
<keyword id="KW-0547">Nucleotide-binding</keyword>
<keyword id="KW-0346">Stress response</keyword>
<dbReference type="EMBL" id="CP000301">
    <property type="protein sequence ID" value="ABD85877.1"/>
    <property type="molecule type" value="Genomic_DNA"/>
</dbReference>
<dbReference type="SMR" id="Q21CK9"/>
<dbReference type="STRING" id="316056.RPC_0302"/>
<dbReference type="KEGG" id="rpc:RPC_0302"/>
<dbReference type="eggNOG" id="COG1220">
    <property type="taxonomic scope" value="Bacteria"/>
</dbReference>
<dbReference type="HOGENOM" id="CLU_033123_0_0_5"/>
<dbReference type="OrthoDB" id="9804062at2"/>
<dbReference type="GO" id="GO:0009376">
    <property type="term" value="C:HslUV protease complex"/>
    <property type="evidence" value="ECO:0007669"/>
    <property type="project" value="UniProtKB-UniRule"/>
</dbReference>
<dbReference type="GO" id="GO:0005524">
    <property type="term" value="F:ATP binding"/>
    <property type="evidence" value="ECO:0007669"/>
    <property type="project" value="UniProtKB-UniRule"/>
</dbReference>
<dbReference type="GO" id="GO:0016887">
    <property type="term" value="F:ATP hydrolysis activity"/>
    <property type="evidence" value="ECO:0007669"/>
    <property type="project" value="InterPro"/>
</dbReference>
<dbReference type="GO" id="GO:0008233">
    <property type="term" value="F:peptidase activity"/>
    <property type="evidence" value="ECO:0007669"/>
    <property type="project" value="InterPro"/>
</dbReference>
<dbReference type="GO" id="GO:0036402">
    <property type="term" value="F:proteasome-activating activity"/>
    <property type="evidence" value="ECO:0007669"/>
    <property type="project" value="UniProtKB-UniRule"/>
</dbReference>
<dbReference type="GO" id="GO:0043335">
    <property type="term" value="P:protein unfolding"/>
    <property type="evidence" value="ECO:0007669"/>
    <property type="project" value="UniProtKB-UniRule"/>
</dbReference>
<dbReference type="GO" id="GO:0051603">
    <property type="term" value="P:proteolysis involved in protein catabolic process"/>
    <property type="evidence" value="ECO:0007669"/>
    <property type="project" value="TreeGrafter"/>
</dbReference>
<dbReference type="CDD" id="cd19498">
    <property type="entry name" value="RecA-like_HslU"/>
    <property type="match status" value="1"/>
</dbReference>
<dbReference type="FunFam" id="3.40.50.300:FF:000213">
    <property type="entry name" value="ATP-dependent protease ATPase subunit HslU"/>
    <property type="match status" value="1"/>
</dbReference>
<dbReference type="FunFam" id="3.40.50.300:FF:000220">
    <property type="entry name" value="ATP-dependent protease ATPase subunit HslU"/>
    <property type="match status" value="1"/>
</dbReference>
<dbReference type="Gene3D" id="1.10.8.60">
    <property type="match status" value="1"/>
</dbReference>
<dbReference type="Gene3D" id="1.10.8.10">
    <property type="entry name" value="DNA helicase RuvA subunit, C-terminal domain"/>
    <property type="match status" value="1"/>
</dbReference>
<dbReference type="Gene3D" id="3.40.50.300">
    <property type="entry name" value="P-loop containing nucleotide triphosphate hydrolases"/>
    <property type="match status" value="2"/>
</dbReference>
<dbReference type="HAMAP" id="MF_00249">
    <property type="entry name" value="HslU"/>
    <property type="match status" value="1"/>
</dbReference>
<dbReference type="InterPro" id="IPR003593">
    <property type="entry name" value="AAA+_ATPase"/>
</dbReference>
<dbReference type="InterPro" id="IPR050052">
    <property type="entry name" value="ATP-dep_Clp_protease_ClpX"/>
</dbReference>
<dbReference type="InterPro" id="IPR003959">
    <property type="entry name" value="ATPase_AAA_core"/>
</dbReference>
<dbReference type="InterPro" id="IPR019489">
    <property type="entry name" value="Clp_ATPase_C"/>
</dbReference>
<dbReference type="InterPro" id="IPR004491">
    <property type="entry name" value="HslU"/>
</dbReference>
<dbReference type="InterPro" id="IPR027417">
    <property type="entry name" value="P-loop_NTPase"/>
</dbReference>
<dbReference type="NCBIfam" id="TIGR00390">
    <property type="entry name" value="hslU"/>
    <property type="match status" value="1"/>
</dbReference>
<dbReference type="NCBIfam" id="NF003544">
    <property type="entry name" value="PRK05201.1"/>
    <property type="match status" value="1"/>
</dbReference>
<dbReference type="PANTHER" id="PTHR48102">
    <property type="entry name" value="ATP-DEPENDENT CLP PROTEASE ATP-BINDING SUBUNIT CLPX-LIKE, MITOCHONDRIAL-RELATED"/>
    <property type="match status" value="1"/>
</dbReference>
<dbReference type="PANTHER" id="PTHR48102:SF3">
    <property type="entry name" value="ATP-DEPENDENT PROTEASE ATPASE SUBUNIT HSLU"/>
    <property type="match status" value="1"/>
</dbReference>
<dbReference type="Pfam" id="PF00004">
    <property type="entry name" value="AAA"/>
    <property type="match status" value="1"/>
</dbReference>
<dbReference type="Pfam" id="PF07724">
    <property type="entry name" value="AAA_2"/>
    <property type="match status" value="1"/>
</dbReference>
<dbReference type="Pfam" id="PF10431">
    <property type="entry name" value="ClpB_D2-small"/>
    <property type="match status" value="1"/>
</dbReference>
<dbReference type="SMART" id="SM00382">
    <property type="entry name" value="AAA"/>
    <property type="match status" value="1"/>
</dbReference>
<dbReference type="SMART" id="SM01086">
    <property type="entry name" value="ClpB_D2-small"/>
    <property type="match status" value="1"/>
</dbReference>
<dbReference type="SUPFAM" id="SSF52540">
    <property type="entry name" value="P-loop containing nucleoside triphosphate hydrolases"/>
    <property type="match status" value="1"/>
</dbReference>
<name>HSLU_RHOPB</name>
<accession>Q21CK9</accession>
<feature type="chain" id="PRO_1000012788" description="ATP-dependent protease ATPase subunit HslU">
    <location>
        <begin position="1"/>
        <end position="434"/>
    </location>
</feature>
<feature type="binding site" evidence="1">
    <location>
        <position position="18"/>
    </location>
    <ligand>
        <name>ATP</name>
        <dbReference type="ChEBI" id="CHEBI:30616"/>
    </ligand>
</feature>
<feature type="binding site" evidence="1">
    <location>
        <begin position="60"/>
        <end position="65"/>
    </location>
    <ligand>
        <name>ATP</name>
        <dbReference type="ChEBI" id="CHEBI:30616"/>
    </ligand>
</feature>
<feature type="binding site" evidence="1">
    <location>
        <position position="247"/>
    </location>
    <ligand>
        <name>ATP</name>
        <dbReference type="ChEBI" id="CHEBI:30616"/>
    </ligand>
</feature>
<feature type="binding site" evidence="1">
    <location>
        <position position="312"/>
    </location>
    <ligand>
        <name>ATP</name>
        <dbReference type="ChEBI" id="CHEBI:30616"/>
    </ligand>
</feature>
<feature type="binding site" evidence="1">
    <location>
        <position position="384"/>
    </location>
    <ligand>
        <name>ATP</name>
        <dbReference type="ChEBI" id="CHEBI:30616"/>
    </ligand>
</feature>
<gene>
    <name evidence="1" type="primary">hslU</name>
    <name type="ordered locus">RPC_0302</name>
</gene>
<sequence>MTDFSPREIVSELDRFIVGQHDAKRAVSIALRNRWRRLQLEGSLREEVLPKNILMIGPTGVGKTEIARRLAKLAGAPFIKVEATKFTEVGYVGRDVEQIIRDLVEVAISQVREKKRKDVEARAQIAAEERVLDALVGANSSATTRDSFRKKLRAGELNDKEIEVETQSTGGGSPMFEIPGMPGAQMGAISLGDIFGKMGGRTKTRRLTVEDSHELLVNEEADKLLDSDQLVQEAINAVENNGIVFLDEIDKICVRDGRSGGEVSREGVQRDLLPLIEGTTVSTKHGAVKTDHILFIASGAFHIAKPSDLLPELQGRLPIRVELSALTRDDMRRILTEPEASLIKQYVALLQTEGVTLEITDEAIDALADVAVAVNSSVENIGARRLQTVMERVLDEISFTAPDRDGETIQVDAAYVQKHVGDLAKNADLSRFIL</sequence>
<comment type="function">
    <text evidence="1">ATPase subunit of a proteasome-like degradation complex; this subunit has chaperone activity. The binding of ATP and its subsequent hydrolysis by HslU are essential for unfolding of protein substrates subsequently hydrolyzed by HslV. HslU recognizes the N-terminal part of its protein substrates and unfolds these before they are guided to HslV for hydrolysis.</text>
</comment>
<comment type="subunit">
    <text evidence="1">A double ring-shaped homohexamer of HslV is capped on each side by a ring-shaped HslU homohexamer. The assembly of the HslU/HslV complex is dependent on binding of ATP.</text>
</comment>
<comment type="subcellular location">
    <subcellularLocation>
        <location evidence="1">Cytoplasm</location>
    </subcellularLocation>
</comment>
<comment type="similarity">
    <text evidence="1">Belongs to the ClpX chaperone family. HslU subfamily.</text>
</comment>